<gene>
    <name type="primary">OVCA2</name>
</gene>
<name>OVCA2_BOVIN</name>
<proteinExistence type="evidence at transcript level"/>
<protein>
    <recommendedName>
        <fullName>Esterase OVCA2</fullName>
        <ecNumber evidence="2">3.1.1.1</ecNumber>
    </recommendedName>
    <alternativeName>
        <fullName>OVCA2 serine hydrolase domain-containing protein</fullName>
    </alternativeName>
    <alternativeName>
        <fullName>Ovarian cancer-associated gene 2 protein homolog</fullName>
    </alternativeName>
</protein>
<reference key="1">
    <citation type="submission" date="2005-08" db="EMBL/GenBank/DDBJ databases">
        <authorList>
            <consortium name="NIH - Mammalian Gene Collection (MGC) project"/>
        </authorList>
    </citation>
    <scope>NUCLEOTIDE SEQUENCE [LARGE SCALE MRNA]</scope>
    <source>
        <strain>Hereford</strain>
        <tissue>Thymus</tissue>
    </source>
</reference>
<accession>Q3SZ07</accession>
<comment type="function">
    <text evidence="2">Exhibits ester hydrolase activity with a strong preference for long-chain alkyl ester substrates and high selectivity against a variety of short, branched, and substituted esters. Is able to hydrolyze ester bonds within a wide range of p-nitrophenyl derivatives (C2-C14) in vitro, with a strong preference toward substrates of &gt;8 carbons.</text>
</comment>
<comment type="catalytic activity">
    <reaction evidence="2">
        <text>a carboxylic ester + H2O = an alcohol + a carboxylate + H(+)</text>
        <dbReference type="Rhea" id="RHEA:21164"/>
        <dbReference type="ChEBI" id="CHEBI:15377"/>
        <dbReference type="ChEBI" id="CHEBI:15378"/>
        <dbReference type="ChEBI" id="CHEBI:29067"/>
        <dbReference type="ChEBI" id="CHEBI:30879"/>
        <dbReference type="ChEBI" id="CHEBI:33308"/>
        <dbReference type="EC" id="3.1.1.1"/>
    </reaction>
</comment>
<comment type="similarity">
    <text evidence="3">Belongs to the LovG family.</text>
</comment>
<feature type="chain" id="PRO_0000300875" description="Esterase OVCA2">
    <location>
        <begin position="1"/>
        <end position="227"/>
    </location>
</feature>
<feature type="active site" description="Charge relay system" evidence="1">
    <location>
        <position position="119"/>
    </location>
</feature>
<feature type="active site" description="Charge relay system" evidence="1">
    <location>
        <position position="179"/>
    </location>
</feature>
<feature type="active site" description="Charge relay system" evidence="1">
    <location>
        <position position="206"/>
    </location>
</feature>
<dbReference type="EC" id="3.1.1.1" evidence="2"/>
<dbReference type="EMBL" id="BC103277">
    <property type="protein sequence ID" value="AAI03278.1"/>
    <property type="molecule type" value="mRNA"/>
</dbReference>
<dbReference type="RefSeq" id="NP_001029773.1">
    <property type="nucleotide sequence ID" value="NM_001034601.2"/>
</dbReference>
<dbReference type="SMR" id="Q3SZ07"/>
<dbReference type="FunCoup" id="Q3SZ07">
    <property type="interactions" value="802"/>
</dbReference>
<dbReference type="STRING" id="9913.ENSBTAP00000012341"/>
<dbReference type="ESTHER" id="bovin-OVCA2">
    <property type="family name" value="FSH1"/>
</dbReference>
<dbReference type="PaxDb" id="9913-ENSBTAP00000012341"/>
<dbReference type="Ensembl" id="ENSBTAT00000012341.3">
    <property type="protein sequence ID" value="ENSBTAP00000012341.2"/>
    <property type="gene ID" value="ENSBTAG00000047926.2"/>
</dbReference>
<dbReference type="GeneID" id="513845"/>
<dbReference type="KEGG" id="bta:513845"/>
<dbReference type="CTD" id="124641"/>
<dbReference type="VEuPathDB" id="HostDB:ENSBTAG00000047926"/>
<dbReference type="VGNC" id="VGNC:32504">
    <property type="gene designation" value="OVCA2"/>
</dbReference>
<dbReference type="eggNOG" id="KOG2551">
    <property type="taxonomic scope" value="Eukaryota"/>
</dbReference>
<dbReference type="GeneTree" id="ENSGT00390000003541"/>
<dbReference type="HOGENOM" id="CLU_051938_2_3_1"/>
<dbReference type="InParanoid" id="Q3SZ07"/>
<dbReference type="OMA" id="EEPRGWW"/>
<dbReference type="OrthoDB" id="414698at2759"/>
<dbReference type="TreeFam" id="TF313006"/>
<dbReference type="Proteomes" id="UP000009136">
    <property type="component" value="Chromosome 19"/>
</dbReference>
<dbReference type="Bgee" id="ENSBTAG00000047926">
    <property type="expression patterns" value="Expressed in adenohypophysis and 106 other cell types or tissues"/>
</dbReference>
<dbReference type="GO" id="GO:0005737">
    <property type="term" value="C:cytoplasm"/>
    <property type="evidence" value="ECO:0000318"/>
    <property type="project" value="GO_Central"/>
</dbReference>
<dbReference type="GO" id="GO:0005634">
    <property type="term" value="C:nucleus"/>
    <property type="evidence" value="ECO:0000318"/>
    <property type="project" value="GO_Central"/>
</dbReference>
<dbReference type="GO" id="GO:0016787">
    <property type="term" value="F:hydrolase activity"/>
    <property type="evidence" value="ECO:0000318"/>
    <property type="project" value="GO_Central"/>
</dbReference>
<dbReference type="FunFam" id="3.40.50.1820:FF:000073">
    <property type="entry name" value="esterase OVCA2 isoform X6"/>
    <property type="match status" value="1"/>
</dbReference>
<dbReference type="Gene3D" id="3.40.50.1820">
    <property type="entry name" value="alpha/beta hydrolase"/>
    <property type="match status" value="1"/>
</dbReference>
<dbReference type="InterPro" id="IPR029058">
    <property type="entry name" value="AB_hydrolase_fold"/>
</dbReference>
<dbReference type="InterPro" id="IPR005645">
    <property type="entry name" value="FSH-like_dom"/>
</dbReference>
<dbReference type="InterPro" id="IPR050593">
    <property type="entry name" value="LovG"/>
</dbReference>
<dbReference type="PANTHER" id="PTHR48070">
    <property type="entry name" value="ESTERASE OVCA2"/>
    <property type="match status" value="1"/>
</dbReference>
<dbReference type="PANTHER" id="PTHR48070:SF6">
    <property type="entry name" value="ESTERASE OVCA2"/>
    <property type="match status" value="1"/>
</dbReference>
<dbReference type="Pfam" id="PF03959">
    <property type="entry name" value="FSH1"/>
    <property type="match status" value="1"/>
</dbReference>
<dbReference type="SUPFAM" id="SSF53474">
    <property type="entry name" value="alpha/beta-Hydrolases"/>
    <property type="match status" value="1"/>
</dbReference>
<keyword id="KW-0378">Hydrolase</keyword>
<keyword id="KW-1185">Reference proteome</keyword>
<keyword id="KW-0719">Serine esterase</keyword>
<evidence type="ECO:0000250" key="1">
    <source>
        <dbReference type="UniProtKB" id="P38777"/>
    </source>
</evidence>
<evidence type="ECO:0000250" key="2">
    <source>
        <dbReference type="UniProtKB" id="Q8WZ82"/>
    </source>
</evidence>
<evidence type="ECO:0000305" key="3"/>
<organism>
    <name type="scientific">Bos taurus</name>
    <name type="common">Bovine</name>
    <dbReference type="NCBI Taxonomy" id="9913"/>
    <lineage>
        <taxon>Eukaryota</taxon>
        <taxon>Metazoa</taxon>
        <taxon>Chordata</taxon>
        <taxon>Craniata</taxon>
        <taxon>Vertebrata</taxon>
        <taxon>Euteleostomi</taxon>
        <taxon>Mammalia</taxon>
        <taxon>Eutheria</taxon>
        <taxon>Laurasiatheria</taxon>
        <taxon>Artiodactyla</taxon>
        <taxon>Ruminantia</taxon>
        <taxon>Pecora</taxon>
        <taxon>Bovidae</taxon>
        <taxon>Bovinae</taxon>
        <taxon>Bos</taxon>
    </lineage>
</organism>
<sequence>MAAQPLLRILCLAGFRQSERGFREKTGALRKALRGRAELVCLSGPHPVVDAAGSEGARPDSGPCPPEEQPQGWWFSEQEADVFLALEEPTACRGLEEALETVAQALNKLGPFDGILGFSQGAALAALVCALGQGGDPRFPLPRFVILVSGFCPRGLGLMEPIMQGPLSLPSLHVFGDTDGVIPSQESMQLCSRFDGAVTLTHSGGHFIPAAAPQRQAYLKFLDQFAD</sequence>